<evidence type="ECO:0000255" key="1"/>
<evidence type="ECO:0000255" key="2">
    <source>
        <dbReference type="PROSITE-ProRule" id="PRU00107"/>
    </source>
</evidence>
<evidence type="ECO:0000269" key="3">
    <source>
    </source>
</evidence>
<evidence type="ECO:0000305" key="4"/>
<proteinExistence type="inferred from homology"/>
<dbReference type="EC" id="2.7.13.3"/>
<dbReference type="EMBL" id="Z75208">
    <property type="protein sequence ID" value="CAA99610.1"/>
    <property type="molecule type" value="Genomic_DNA"/>
</dbReference>
<dbReference type="EMBL" id="AL009126">
    <property type="protein sequence ID" value="CAB14853.1"/>
    <property type="molecule type" value="Genomic_DNA"/>
</dbReference>
<dbReference type="PIR" id="A69655">
    <property type="entry name" value="A69655"/>
</dbReference>
<dbReference type="RefSeq" id="NP_390771.1">
    <property type="nucleotide sequence ID" value="NC_000964.3"/>
</dbReference>
<dbReference type="RefSeq" id="WP_003229477.1">
    <property type="nucleotide sequence ID" value="NZ_OZ025638.1"/>
</dbReference>
<dbReference type="SMR" id="P94513"/>
<dbReference type="FunCoup" id="P94513">
    <property type="interactions" value="178"/>
</dbReference>
<dbReference type="STRING" id="224308.BSU28930"/>
<dbReference type="PaxDb" id="224308-BSU28930"/>
<dbReference type="EnsemblBacteria" id="CAB14853">
    <property type="protein sequence ID" value="CAB14853"/>
    <property type="gene ID" value="BSU_28930"/>
</dbReference>
<dbReference type="GeneID" id="937404"/>
<dbReference type="KEGG" id="bsu:BSU28930"/>
<dbReference type="PATRIC" id="fig|224308.179.peg.3141"/>
<dbReference type="eggNOG" id="COG3275">
    <property type="taxonomic scope" value="Bacteria"/>
</dbReference>
<dbReference type="InParanoid" id="P94513"/>
<dbReference type="OrthoDB" id="9776552at2"/>
<dbReference type="PhylomeDB" id="P94513"/>
<dbReference type="BioCyc" id="BSUB:BSU28930-MONOMER"/>
<dbReference type="Proteomes" id="UP000001570">
    <property type="component" value="Chromosome"/>
</dbReference>
<dbReference type="GO" id="GO:0005886">
    <property type="term" value="C:plasma membrane"/>
    <property type="evidence" value="ECO:0000318"/>
    <property type="project" value="GO_Central"/>
</dbReference>
<dbReference type="GO" id="GO:0005524">
    <property type="term" value="F:ATP binding"/>
    <property type="evidence" value="ECO:0007669"/>
    <property type="project" value="UniProtKB-KW"/>
</dbReference>
<dbReference type="GO" id="GO:0000155">
    <property type="term" value="F:phosphorelay sensor kinase activity"/>
    <property type="evidence" value="ECO:0000318"/>
    <property type="project" value="GO_Central"/>
</dbReference>
<dbReference type="GO" id="GO:0071555">
    <property type="term" value="P:cell wall organization"/>
    <property type="evidence" value="ECO:0007669"/>
    <property type="project" value="InterPro"/>
</dbReference>
<dbReference type="GO" id="GO:0007165">
    <property type="term" value="P:signal transduction"/>
    <property type="evidence" value="ECO:0000318"/>
    <property type="project" value="GO_Central"/>
</dbReference>
<dbReference type="CDD" id="cd16957">
    <property type="entry name" value="HATPase_LytS-like"/>
    <property type="match status" value="1"/>
</dbReference>
<dbReference type="Gene3D" id="3.30.450.40">
    <property type="match status" value="1"/>
</dbReference>
<dbReference type="Gene3D" id="3.30.565.10">
    <property type="entry name" value="Histidine kinase-like ATPase, C-terminal domain"/>
    <property type="match status" value="1"/>
</dbReference>
<dbReference type="InterPro" id="IPR050640">
    <property type="entry name" value="Bact_2-comp_sensor_kinase"/>
</dbReference>
<dbReference type="InterPro" id="IPR003018">
    <property type="entry name" value="GAF"/>
</dbReference>
<dbReference type="InterPro" id="IPR029016">
    <property type="entry name" value="GAF-like_dom_sf"/>
</dbReference>
<dbReference type="InterPro" id="IPR036890">
    <property type="entry name" value="HATPase_C_sf"/>
</dbReference>
<dbReference type="InterPro" id="IPR005467">
    <property type="entry name" value="His_kinase_dom"/>
</dbReference>
<dbReference type="InterPro" id="IPR010559">
    <property type="entry name" value="Sig_transdc_His_kin_internal"/>
</dbReference>
<dbReference type="InterPro" id="IPR011620">
    <property type="entry name" value="Sig_transdc_His_kinase_LytS_TM"/>
</dbReference>
<dbReference type="PANTHER" id="PTHR34220">
    <property type="entry name" value="SENSOR HISTIDINE KINASE YPDA"/>
    <property type="match status" value="1"/>
</dbReference>
<dbReference type="PANTHER" id="PTHR34220:SF7">
    <property type="entry name" value="SENSOR HISTIDINE KINASE YPDA"/>
    <property type="match status" value="1"/>
</dbReference>
<dbReference type="Pfam" id="PF07694">
    <property type="entry name" value="5TM-5TMR_LYT"/>
    <property type="match status" value="1"/>
</dbReference>
<dbReference type="Pfam" id="PF01590">
    <property type="entry name" value="GAF"/>
    <property type="match status" value="1"/>
</dbReference>
<dbReference type="Pfam" id="PF02518">
    <property type="entry name" value="HATPase_c"/>
    <property type="match status" value="1"/>
</dbReference>
<dbReference type="Pfam" id="PF06580">
    <property type="entry name" value="His_kinase"/>
    <property type="match status" value="1"/>
</dbReference>
<dbReference type="SMART" id="SM00065">
    <property type="entry name" value="GAF"/>
    <property type="match status" value="1"/>
</dbReference>
<dbReference type="SMART" id="SM00387">
    <property type="entry name" value="HATPase_c"/>
    <property type="match status" value="1"/>
</dbReference>
<dbReference type="SUPFAM" id="SSF55874">
    <property type="entry name" value="ATPase domain of HSP90 chaperone/DNA topoisomerase II/histidine kinase"/>
    <property type="match status" value="1"/>
</dbReference>
<dbReference type="SUPFAM" id="SSF55781">
    <property type="entry name" value="GAF domain-like"/>
    <property type="match status" value="1"/>
</dbReference>
<dbReference type="PROSITE" id="PS50109">
    <property type="entry name" value="HIS_KIN"/>
    <property type="match status" value="1"/>
</dbReference>
<organism>
    <name type="scientific">Bacillus subtilis (strain 168)</name>
    <dbReference type="NCBI Taxonomy" id="224308"/>
    <lineage>
        <taxon>Bacteria</taxon>
        <taxon>Bacillati</taxon>
        <taxon>Bacillota</taxon>
        <taxon>Bacilli</taxon>
        <taxon>Bacillales</taxon>
        <taxon>Bacillaceae</taxon>
        <taxon>Bacillus</taxon>
    </lineage>
</organism>
<protein>
    <recommendedName>
        <fullName>Sensor protein LytS</fullName>
        <ecNumber>2.7.13.3</ecNumber>
    </recommendedName>
</protein>
<name>LYTS_BACSU</name>
<reference key="1">
    <citation type="journal article" date="1996" name="Microbiology">
        <title>The dnaB-pheA (256 degrees-240 degrees) region of the Bacillus subtilis chromosome containing genes responsible for stress responses, the utilization of plant cell walls and primary metabolism.</title>
        <authorList>
            <person name="Wipat A."/>
            <person name="Carter N."/>
            <person name="Brignell C.S."/>
            <person name="Guy J.B."/>
            <person name="Piper K."/>
            <person name="Sanders J."/>
            <person name="Emmerson P.T."/>
            <person name="Harwood C.R."/>
        </authorList>
    </citation>
    <scope>NUCLEOTIDE SEQUENCE [GENOMIC DNA]</scope>
    <source>
        <strain>168</strain>
    </source>
</reference>
<reference key="2">
    <citation type="journal article" date="1997" name="Nature">
        <title>The complete genome sequence of the Gram-positive bacterium Bacillus subtilis.</title>
        <authorList>
            <person name="Kunst F."/>
            <person name="Ogasawara N."/>
            <person name="Moszer I."/>
            <person name="Albertini A.M."/>
            <person name="Alloni G."/>
            <person name="Azevedo V."/>
            <person name="Bertero M.G."/>
            <person name="Bessieres P."/>
            <person name="Bolotin A."/>
            <person name="Borchert S."/>
            <person name="Borriss R."/>
            <person name="Boursier L."/>
            <person name="Brans A."/>
            <person name="Braun M."/>
            <person name="Brignell S.C."/>
            <person name="Bron S."/>
            <person name="Brouillet S."/>
            <person name="Bruschi C.V."/>
            <person name="Caldwell B."/>
            <person name="Capuano V."/>
            <person name="Carter N.M."/>
            <person name="Choi S.-K."/>
            <person name="Codani J.-J."/>
            <person name="Connerton I.F."/>
            <person name="Cummings N.J."/>
            <person name="Daniel R.A."/>
            <person name="Denizot F."/>
            <person name="Devine K.M."/>
            <person name="Duesterhoeft A."/>
            <person name="Ehrlich S.D."/>
            <person name="Emmerson P.T."/>
            <person name="Entian K.-D."/>
            <person name="Errington J."/>
            <person name="Fabret C."/>
            <person name="Ferrari E."/>
            <person name="Foulger D."/>
            <person name="Fritz C."/>
            <person name="Fujita M."/>
            <person name="Fujita Y."/>
            <person name="Fuma S."/>
            <person name="Galizzi A."/>
            <person name="Galleron N."/>
            <person name="Ghim S.-Y."/>
            <person name="Glaser P."/>
            <person name="Goffeau A."/>
            <person name="Golightly E.J."/>
            <person name="Grandi G."/>
            <person name="Guiseppi G."/>
            <person name="Guy B.J."/>
            <person name="Haga K."/>
            <person name="Haiech J."/>
            <person name="Harwood C.R."/>
            <person name="Henaut A."/>
            <person name="Hilbert H."/>
            <person name="Holsappel S."/>
            <person name="Hosono S."/>
            <person name="Hullo M.-F."/>
            <person name="Itaya M."/>
            <person name="Jones L.-M."/>
            <person name="Joris B."/>
            <person name="Karamata D."/>
            <person name="Kasahara Y."/>
            <person name="Klaerr-Blanchard M."/>
            <person name="Klein C."/>
            <person name="Kobayashi Y."/>
            <person name="Koetter P."/>
            <person name="Koningstein G."/>
            <person name="Krogh S."/>
            <person name="Kumano M."/>
            <person name="Kurita K."/>
            <person name="Lapidus A."/>
            <person name="Lardinois S."/>
            <person name="Lauber J."/>
            <person name="Lazarevic V."/>
            <person name="Lee S.-M."/>
            <person name="Levine A."/>
            <person name="Liu H."/>
            <person name="Masuda S."/>
            <person name="Mauel C."/>
            <person name="Medigue C."/>
            <person name="Medina N."/>
            <person name="Mellado R.P."/>
            <person name="Mizuno M."/>
            <person name="Moestl D."/>
            <person name="Nakai S."/>
            <person name="Noback M."/>
            <person name="Noone D."/>
            <person name="O'Reilly M."/>
            <person name="Ogawa K."/>
            <person name="Ogiwara A."/>
            <person name="Oudega B."/>
            <person name="Park S.-H."/>
            <person name="Parro V."/>
            <person name="Pohl T.M."/>
            <person name="Portetelle D."/>
            <person name="Porwollik S."/>
            <person name="Prescott A.M."/>
            <person name="Presecan E."/>
            <person name="Pujic P."/>
            <person name="Purnelle B."/>
            <person name="Rapoport G."/>
            <person name="Rey M."/>
            <person name="Reynolds S."/>
            <person name="Rieger M."/>
            <person name="Rivolta C."/>
            <person name="Rocha E."/>
            <person name="Roche B."/>
            <person name="Rose M."/>
            <person name="Sadaie Y."/>
            <person name="Sato T."/>
            <person name="Scanlan E."/>
            <person name="Schleich S."/>
            <person name="Schroeter R."/>
            <person name="Scoffone F."/>
            <person name="Sekiguchi J."/>
            <person name="Sekowska A."/>
            <person name="Seror S.J."/>
            <person name="Serror P."/>
            <person name="Shin B.-S."/>
            <person name="Soldo B."/>
            <person name="Sorokin A."/>
            <person name="Tacconi E."/>
            <person name="Takagi T."/>
            <person name="Takahashi H."/>
            <person name="Takemaru K."/>
            <person name="Takeuchi M."/>
            <person name="Tamakoshi A."/>
            <person name="Tanaka T."/>
            <person name="Terpstra P."/>
            <person name="Tognoni A."/>
            <person name="Tosato V."/>
            <person name="Uchiyama S."/>
            <person name="Vandenbol M."/>
            <person name="Vannier F."/>
            <person name="Vassarotti A."/>
            <person name="Viari A."/>
            <person name="Wambutt R."/>
            <person name="Wedler E."/>
            <person name="Wedler H."/>
            <person name="Weitzenegger T."/>
            <person name="Winters P."/>
            <person name="Wipat A."/>
            <person name="Yamamoto H."/>
            <person name="Yamane K."/>
            <person name="Yasumoto K."/>
            <person name="Yata K."/>
            <person name="Yoshida K."/>
            <person name="Yoshikawa H.-F."/>
            <person name="Zumstein E."/>
            <person name="Yoshikawa H."/>
            <person name="Danchin A."/>
        </authorList>
    </citation>
    <scope>NUCLEOTIDE SEQUENCE [LARGE SCALE GENOMIC DNA]</scope>
    <source>
        <strain>168</strain>
    </source>
</reference>
<reference key="3">
    <citation type="journal article" date="2001" name="J. Bacteriol.">
        <title>Comprehensive DNA microarray analysis of Bacillus subtilis two-component regulatory systems.</title>
        <authorList>
            <person name="Kobayashi K."/>
            <person name="Ogura M."/>
            <person name="Yamaguchi H."/>
            <person name="Yoshida K."/>
            <person name="Ogasawara N."/>
            <person name="Tanaka T."/>
            <person name="Fujita Y."/>
        </authorList>
    </citation>
    <scope>FUNCTION</scope>
</reference>
<accession>P94513</accession>
<gene>
    <name type="primary">lytS</name>
    <name type="ordered locus">BSU28930</name>
</gene>
<feature type="chain" id="PRO_0000074789" description="Sensor protein LytS">
    <location>
        <begin position="1"/>
        <end position="593"/>
    </location>
</feature>
<feature type="topological domain" description="Cytoplasmic" evidence="1">
    <location>
        <begin position="1"/>
        <end position="12"/>
    </location>
</feature>
<feature type="transmembrane region" description="Helical" evidence="1">
    <location>
        <begin position="13"/>
        <end position="32"/>
    </location>
</feature>
<feature type="topological domain" description="Extracellular" evidence="1">
    <location>
        <begin position="33"/>
        <end position="41"/>
    </location>
</feature>
<feature type="transmembrane region" description="Helical" evidence="1">
    <location>
        <begin position="42"/>
        <end position="60"/>
    </location>
</feature>
<feature type="topological domain" description="Cytoplasmic" evidence="1">
    <location>
        <begin position="61"/>
        <end position="86"/>
    </location>
</feature>
<feature type="transmembrane region" description="Helical" evidence="1">
    <location>
        <begin position="87"/>
        <end position="109"/>
    </location>
</feature>
<feature type="topological domain" description="Extracellular" evidence="1">
    <location>
        <begin position="110"/>
        <end position="117"/>
    </location>
</feature>
<feature type="transmembrane region" description="Helical" evidence="1">
    <location>
        <begin position="118"/>
        <end position="138"/>
    </location>
</feature>
<feature type="topological domain" description="Cytoplasmic" evidence="1">
    <location>
        <begin position="139"/>
        <end position="152"/>
    </location>
</feature>
<feature type="transmembrane region" description="Helical" evidence="1">
    <location>
        <begin position="153"/>
        <end position="173"/>
    </location>
</feature>
<feature type="topological domain" description="Extracellular" evidence="1">
    <location>
        <begin position="174"/>
        <end position="184"/>
    </location>
</feature>
<feature type="transmembrane region" description="Helical" evidence="1">
    <location>
        <begin position="185"/>
        <end position="205"/>
    </location>
</feature>
<feature type="topological domain" description="Cytoplasmic" evidence="1">
    <location>
        <begin position="206"/>
        <end position="593"/>
    </location>
</feature>
<feature type="domain" description="GAF">
    <location>
        <begin position="238"/>
        <end position="363"/>
    </location>
</feature>
<feature type="domain" description="Histidine kinase" evidence="2">
    <location>
        <begin position="363"/>
        <end position="580"/>
    </location>
</feature>
<feature type="modified residue" description="Phosphohistidine; by autocatalysis" evidence="2">
    <location>
        <position position="390"/>
    </location>
</feature>
<sequence length="593" mass="64855">MIHLMIMMLERVGIIVILGFILAHTKLFRQALQNQDGYKGKAILISIFSLFSIISNYTGIEIQRNMIVNNDWVFTIDPSGSIANTRILGVEIGGLLGGPFVGAGIGILAGLHRFSLGGSTALSCAVSSILAGVLAGLIGRYFTKRYRMPTPRIAALVGIGMESLQMIIILLMAKPFSDAWELVSMIGIPMILINGTGSFIFLSIIQAIIRKEEQARALETHRVLTIADQTLPFFRQGLNENSCKSVAAIIHKLTGTDAVSLTDKEKILAHVGAGMDHHIPSKSLITGLSKKVIKTGHIMKAISQEEIECTHAECPLHAAIVLPLTSNGNTIGTLKMYFKSPAGLSQVEEELAEGLAMLFSTQLELGEAELQSKLLKDAEIKALQAQVNPHFLFNAINTISALCRTDVEKTRKLLLQLSVYFRSNLQGARQLLIPLSKELNHLNAYLSLEQARFPGKYKIELNIDSRLEQIEIPPFVLQVLVENALRHAFPKKQDICKVTVCVLSDDASVYMKVADNGRGIPPDVLPELGKKPFPSKEGTGTALYNLNQRLIGLFGQQAALHISSEVHKGTEVSFQVPMQQMKEGEEHAQGVNS</sequence>
<comment type="function">
    <text evidence="3">Member of the two-component regulatory system LytS/LytT that probably regulates genes involved in cell wall metabolism.</text>
</comment>
<comment type="catalytic activity">
    <reaction>
        <text>ATP + protein L-histidine = ADP + protein N-phospho-L-histidine.</text>
        <dbReference type="EC" id="2.7.13.3"/>
    </reaction>
</comment>
<comment type="subcellular location">
    <subcellularLocation>
        <location evidence="4">Cell membrane</location>
        <topology evidence="4">Multi-pass membrane protein</topology>
    </subcellularLocation>
</comment>
<keyword id="KW-0067">ATP-binding</keyword>
<keyword id="KW-1003">Cell membrane</keyword>
<keyword id="KW-0418">Kinase</keyword>
<keyword id="KW-0472">Membrane</keyword>
<keyword id="KW-0547">Nucleotide-binding</keyword>
<keyword id="KW-0597">Phosphoprotein</keyword>
<keyword id="KW-1185">Reference proteome</keyword>
<keyword id="KW-0808">Transferase</keyword>
<keyword id="KW-0812">Transmembrane</keyword>
<keyword id="KW-1133">Transmembrane helix</keyword>
<keyword id="KW-0902">Two-component regulatory system</keyword>